<evidence type="ECO:0000250" key="1">
    <source>
        <dbReference type="UniProtKB" id="O75663"/>
    </source>
</evidence>
<evidence type="ECO:0000305" key="2"/>
<keyword id="KW-0963">Cytoplasm</keyword>
<keyword id="KW-1185">Reference proteome</keyword>
<sequence>MMIQGFKSSNQEFKFGPWQLTAIKTHIMKSADAEKLAEEMSMPCLPEMMFGDNVLRIQHTSGFGIEFNAKDALKVVKSNQASLKVACAEEWQESRSDSEHNKEVVKPYDWTYTTDYKGTLLGDNMKLNVIPTTDKINTEKLKAREQIMFFEEVLLFEDELHDHGVSSLSVKIRVMPTSFFLLLRYFLRVDGVLIRMNDTRLYHEADKTFMLREYTSKESKISNLSHVPPPLYTEPNEISQYLPVTQTIYEKLEFPSQDLEKAVLVDTKNVTAL</sequence>
<name>TIPRL_XENTR</name>
<feature type="chain" id="PRO_0000301857" description="TIP41-like protein">
    <location>
        <begin position="1"/>
        <end position="273"/>
    </location>
</feature>
<gene>
    <name type="primary">tiprl</name>
</gene>
<reference key="1">
    <citation type="submission" date="2005-02" db="EMBL/GenBank/DDBJ databases">
        <authorList>
            <consortium name="NIH - Xenopus Gene Collection (XGC) project"/>
        </authorList>
    </citation>
    <scope>NUCLEOTIDE SEQUENCE [LARGE SCALE MRNA]</scope>
</reference>
<protein>
    <recommendedName>
        <fullName>TIP41-like protein</fullName>
    </recommendedName>
</protein>
<accession>Q5FW12</accession>
<organism>
    <name type="scientific">Xenopus tropicalis</name>
    <name type="common">Western clawed frog</name>
    <name type="synonym">Silurana tropicalis</name>
    <dbReference type="NCBI Taxonomy" id="8364"/>
    <lineage>
        <taxon>Eukaryota</taxon>
        <taxon>Metazoa</taxon>
        <taxon>Chordata</taxon>
        <taxon>Craniata</taxon>
        <taxon>Vertebrata</taxon>
        <taxon>Euteleostomi</taxon>
        <taxon>Amphibia</taxon>
        <taxon>Batrachia</taxon>
        <taxon>Anura</taxon>
        <taxon>Pipoidea</taxon>
        <taxon>Pipidae</taxon>
        <taxon>Xenopodinae</taxon>
        <taxon>Xenopus</taxon>
        <taxon>Silurana</taxon>
    </lineage>
</organism>
<proteinExistence type="evidence at transcript level"/>
<dbReference type="EMBL" id="BC089671">
    <property type="protein sequence ID" value="AAH89671.1"/>
    <property type="molecule type" value="mRNA"/>
</dbReference>
<dbReference type="RefSeq" id="NP_001015736.1">
    <property type="nucleotide sequence ID" value="NM_001015736.1"/>
</dbReference>
<dbReference type="SMR" id="Q5FW12"/>
<dbReference type="FunCoup" id="Q5FW12">
    <property type="interactions" value="2005"/>
</dbReference>
<dbReference type="STRING" id="8364.ENSXETP00000039675"/>
<dbReference type="PaxDb" id="8364-ENSXETP00000015436"/>
<dbReference type="DNASU" id="548453"/>
<dbReference type="GeneID" id="548453"/>
<dbReference type="KEGG" id="xtr:548453"/>
<dbReference type="AGR" id="Xenbase:XB-GENE-5917981"/>
<dbReference type="CTD" id="261726"/>
<dbReference type="Xenbase" id="XB-GENE-5917981">
    <property type="gene designation" value="tiprl"/>
</dbReference>
<dbReference type="eggNOG" id="KOG3224">
    <property type="taxonomic scope" value="Eukaryota"/>
</dbReference>
<dbReference type="HOGENOM" id="CLU_039187_2_0_1"/>
<dbReference type="InParanoid" id="Q5FW12"/>
<dbReference type="OMA" id="DMILFED"/>
<dbReference type="OrthoDB" id="10253878at2759"/>
<dbReference type="PhylomeDB" id="Q5FW12"/>
<dbReference type="TreeFam" id="TF105943"/>
<dbReference type="Proteomes" id="UP000008143">
    <property type="component" value="Chromosome 4"/>
</dbReference>
<dbReference type="Bgee" id="ENSXETG00000007092">
    <property type="expression patterns" value="Expressed in ovary and 13 other cell types or tissues"/>
</dbReference>
<dbReference type="GO" id="GO:0005737">
    <property type="term" value="C:cytoplasm"/>
    <property type="evidence" value="ECO:0007669"/>
    <property type="project" value="UniProtKB-SubCell"/>
</dbReference>
<dbReference type="InterPro" id="IPR051330">
    <property type="entry name" value="Phosphatase_reg/MetRdx"/>
</dbReference>
<dbReference type="InterPro" id="IPR007303">
    <property type="entry name" value="TIP41-like"/>
</dbReference>
<dbReference type="PANTHER" id="PTHR21021">
    <property type="entry name" value="GAF/PUTATIVE CYTOSKELETAL PROTEIN"/>
    <property type="match status" value="1"/>
</dbReference>
<dbReference type="PANTHER" id="PTHR21021:SF16">
    <property type="entry name" value="TIP41-LIKE PROTEIN"/>
    <property type="match status" value="1"/>
</dbReference>
<dbReference type="Pfam" id="PF04176">
    <property type="entry name" value="TIP41"/>
    <property type="match status" value="1"/>
</dbReference>
<comment type="function">
    <text evidence="1">May be a regulator of serine/threonine-protein phosphatases 2A (PP2A) and 4 (PP4).</text>
</comment>
<comment type="subcellular location">
    <subcellularLocation>
        <location evidence="1">Cytoplasm</location>
    </subcellularLocation>
</comment>
<comment type="similarity">
    <text evidence="2">Belongs to the TIP41 family.</text>
</comment>